<organism>
    <name type="scientific">Clostridium tetani (strain Massachusetts / E88)</name>
    <dbReference type="NCBI Taxonomy" id="212717"/>
    <lineage>
        <taxon>Bacteria</taxon>
        <taxon>Bacillati</taxon>
        <taxon>Bacillota</taxon>
        <taxon>Clostridia</taxon>
        <taxon>Eubacteriales</taxon>
        <taxon>Clostridiaceae</taxon>
        <taxon>Clostridium</taxon>
    </lineage>
</organism>
<feature type="chain" id="PRO_0000138299" description="UvrABC system protein C">
    <location>
        <begin position="1"/>
        <end position="622"/>
    </location>
</feature>
<feature type="domain" description="GIY-YIG" evidence="1">
    <location>
        <begin position="13"/>
        <end position="92"/>
    </location>
</feature>
<feature type="domain" description="UVR" evidence="1">
    <location>
        <begin position="204"/>
        <end position="239"/>
    </location>
</feature>
<proteinExistence type="inferred from homology"/>
<reference key="1">
    <citation type="journal article" date="2003" name="Proc. Natl. Acad. Sci. U.S.A.">
        <title>The genome sequence of Clostridium tetani, the causative agent of tetanus disease.</title>
        <authorList>
            <person name="Brueggemann H."/>
            <person name="Baeumer S."/>
            <person name="Fricke W.F."/>
            <person name="Wiezer A."/>
            <person name="Liesegang H."/>
            <person name="Decker I."/>
            <person name="Herzberg C."/>
            <person name="Martinez-Arias R."/>
            <person name="Merkl R."/>
            <person name="Henne A."/>
            <person name="Gottschalk G."/>
        </authorList>
    </citation>
    <scope>NUCLEOTIDE SEQUENCE [LARGE SCALE GENOMIC DNA]</scope>
    <source>
        <strain>Massachusetts / E88</strain>
    </source>
</reference>
<dbReference type="EMBL" id="AE015927">
    <property type="protein sequence ID" value="AAO36960.1"/>
    <property type="molecule type" value="Genomic_DNA"/>
</dbReference>
<dbReference type="RefSeq" id="WP_011100621.1">
    <property type="nucleotide sequence ID" value="NC_004557.1"/>
</dbReference>
<dbReference type="SMR" id="Q890Y5"/>
<dbReference type="STRING" id="212717.CTC_02497"/>
<dbReference type="GeneID" id="24252944"/>
<dbReference type="KEGG" id="ctc:CTC_02497"/>
<dbReference type="HOGENOM" id="CLU_014841_3_2_9"/>
<dbReference type="OrthoDB" id="9804933at2"/>
<dbReference type="Proteomes" id="UP000001412">
    <property type="component" value="Chromosome"/>
</dbReference>
<dbReference type="GO" id="GO:0005737">
    <property type="term" value="C:cytoplasm"/>
    <property type="evidence" value="ECO:0007669"/>
    <property type="project" value="UniProtKB-SubCell"/>
</dbReference>
<dbReference type="GO" id="GO:0009380">
    <property type="term" value="C:excinuclease repair complex"/>
    <property type="evidence" value="ECO:0007669"/>
    <property type="project" value="InterPro"/>
</dbReference>
<dbReference type="GO" id="GO:0003677">
    <property type="term" value="F:DNA binding"/>
    <property type="evidence" value="ECO:0007669"/>
    <property type="project" value="UniProtKB-UniRule"/>
</dbReference>
<dbReference type="GO" id="GO:0009381">
    <property type="term" value="F:excinuclease ABC activity"/>
    <property type="evidence" value="ECO:0007669"/>
    <property type="project" value="UniProtKB-UniRule"/>
</dbReference>
<dbReference type="GO" id="GO:0006289">
    <property type="term" value="P:nucleotide-excision repair"/>
    <property type="evidence" value="ECO:0007669"/>
    <property type="project" value="UniProtKB-UniRule"/>
</dbReference>
<dbReference type="GO" id="GO:0009432">
    <property type="term" value="P:SOS response"/>
    <property type="evidence" value="ECO:0007669"/>
    <property type="project" value="UniProtKB-UniRule"/>
</dbReference>
<dbReference type="CDD" id="cd10434">
    <property type="entry name" value="GIY-YIG_UvrC_Cho"/>
    <property type="match status" value="1"/>
</dbReference>
<dbReference type="FunFam" id="3.40.1440.10:FF:000001">
    <property type="entry name" value="UvrABC system protein C"/>
    <property type="match status" value="1"/>
</dbReference>
<dbReference type="Gene3D" id="1.10.150.20">
    <property type="entry name" value="5' to 3' exonuclease, C-terminal subdomain"/>
    <property type="match status" value="1"/>
</dbReference>
<dbReference type="Gene3D" id="3.40.1440.10">
    <property type="entry name" value="GIY-YIG endonuclease"/>
    <property type="match status" value="1"/>
</dbReference>
<dbReference type="Gene3D" id="4.10.860.10">
    <property type="entry name" value="UVR domain"/>
    <property type="match status" value="1"/>
</dbReference>
<dbReference type="Gene3D" id="3.30.420.340">
    <property type="entry name" value="UvrC, RNAse H endonuclease domain"/>
    <property type="match status" value="1"/>
</dbReference>
<dbReference type="HAMAP" id="MF_00203">
    <property type="entry name" value="UvrC"/>
    <property type="match status" value="1"/>
</dbReference>
<dbReference type="InterPro" id="IPR041663">
    <property type="entry name" value="DisA/LigA_HHH"/>
</dbReference>
<dbReference type="InterPro" id="IPR000305">
    <property type="entry name" value="GIY-YIG_endonuc"/>
</dbReference>
<dbReference type="InterPro" id="IPR035901">
    <property type="entry name" value="GIY-YIG_endonuc_sf"/>
</dbReference>
<dbReference type="InterPro" id="IPR047296">
    <property type="entry name" value="GIY-YIG_UvrC_Cho"/>
</dbReference>
<dbReference type="InterPro" id="IPR010994">
    <property type="entry name" value="RuvA_2-like"/>
</dbReference>
<dbReference type="InterPro" id="IPR001943">
    <property type="entry name" value="UVR_dom"/>
</dbReference>
<dbReference type="InterPro" id="IPR036876">
    <property type="entry name" value="UVR_dom_sf"/>
</dbReference>
<dbReference type="InterPro" id="IPR050066">
    <property type="entry name" value="UvrABC_protein_C"/>
</dbReference>
<dbReference type="InterPro" id="IPR004791">
    <property type="entry name" value="UvrC"/>
</dbReference>
<dbReference type="InterPro" id="IPR001162">
    <property type="entry name" value="UvrC_RNase_H_dom"/>
</dbReference>
<dbReference type="InterPro" id="IPR038476">
    <property type="entry name" value="UvrC_RNase_H_dom_sf"/>
</dbReference>
<dbReference type="NCBIfam" id="NF001824">
    <property type="entry name" value="PRK00558.1-5"/>
    <property type="match status" value="1"/>
</dbReference>
<dbReference type="NCBIfam" id="TIGR00194">
    <property type="entry name" value="uvrC"/>
    <property type="match status" value="1"/>
</dbReference>
<dbReference type="PANTHER" id="PTHR30562:SF1">
    <property type="entry name" value="UVRABC SYSTEM PROTEIN C"/>
    <property type="match status" value="1"/>
</dbReference>
<dbReference type="PANTHER" id="PTHR30562">
    <property type="entry name" value="UVRC/OXIDOREDUCTASE"/>
    <property type="match status" value="1"/>
</dbReference>
<dbReference type="Pfam" id="PF01541">
    <property type="entry name" value="GIY-YIG"/>
    <property type="match status" value="1"/>
</dbReference>
<dbReference type="Pfam" id="PF12826">
    <property type="entry name" value="HHH_2"/>
    <property type="match status" value="1"/>
</dbReference>
<dbReference type="Pfam" id="PF02151">
    <property type="entry name" value="UVR"/>
    <property type="match status" value="1"/>
</dbReference>
<dbReference type="Pfam" id="PF22920">
    <property type="entry name" value="UvrC_RNaseH"/>
    <property type="match status" value="1"/>
</dbReference>
<dbReference type="Pfam" id="PF08459">
    <property type="entry name" value="UvrC_RNaseH_dom"/>
    <property type="match status" value="1"/>
</dbReference>
<dbReference type="SMART" id="SM00465">
    <property type="entry name" value="GIYc"/>
    <property type="match status" value="1"/>
</dbReference>
<dbReference type="SUPFAM" id="SSF46600">
    <property type="entry name" value="C-terminal UvrC-binding domain of UvrB"/>
    <property type="match status" value="1"/>
</dbReference>
<dbReference type="SUPFAM" id="SSF82771">
    <property type="entry name" value="GIY-YIG endonuclease"/>
    <property type="match status" value="1"/>
</dbReference>
<dbReference type="SUPFAM" id="SSF47781">
    <property type="entry name" value="RuvA domain 2-like"/>
    <property type="match status" value="1"/>
</dbReference>
<dbReference type="PROSITE" id="PS50164">
    <property type="entry name" value="GIY_YIG"/>
    <property type="match status" value="1"/>
</dbReference>
<dbReference type="PROSITE" id="PS50151">
    <property type="entry name" value="UVR"/>
    <property type="match status" value="1"/>
</dbReference>
<dbReference type="PROSITE" id="PS50165">
    <property type="entry name" value="UVRC"/>
    <property type="match status" value="1"/>
</dbReference>
<accession>Q890Y5</accession>
<sequence>MFDFEYQLKVLPEKPGVYLMKNSSDEVIYVGKAKILKNRVKQYFQQSKNHSEKVRVMVSNIAEFEYIITDSEMEALILECNLIKKYRPKYNILLKDDKGYPYIKITINEDFPRVFISRTIAKDGSRYFGPYTDYSAVRETIELIKKIFPIRSCKRYIRDGQKPTRPCLNYHIKLCSAPCGAHISKQGYALIINDIVQLLSGKDKDILDKLKNQMEEASNSLQFEKAASLRDKIFAVKKITEKQKIIMGSFQNEDYINIAKDEKDSCVQVFFVREGKIIGREHFILEYTSDEREYKIIAEFIKDFYGGAAFVPKTVYVPDIEDKYLLEQWLTIRRGSKVEIKVPKRGEKIELLNLVKKNAKLTLEQFKIKYLQDKALYEVALAELSDILGFDDMPNRIEAYDISNIQGVDSVGSMVVFEKGRSKKSDYRRFKIKTVEGANDYHSMREILRRRFQRGIEEIQQIQKRNLEFSSGKFSVFPDLILIDGGKGHVNIALEVLKELNIEIPVAGMVKDDSHTTRGIIYNNIEKDISLDSNAMKLITRIQDEVHRFAISYHRTLRDKRVLKSILDDIPNIGTIRKKELLKKFGSIESIKKASIDQLLETPSIDKRSALSIKEFFAPNEL</sequence>
<gene>
    <name evidence="1" type="primary">uvrC</name>
    <name type="ordered locus">CTC_02497</name>
</gene>
<evidence type="ECO:0000255" key="1">
    <source>
        <dbReference type="HAMAP-Rule" id="MF_00203"/>
    </source>
</evidence>
<comment type="function">
    <text evidence="1">The UvrABC repair system catalyzes the recognition and processing of DNA lesions. UvrC both incises the 5' and 3' sides of the lesion. The N-terminal half is responsible for the 3' incision and the C-terminal half is responsible for the 5' incision.</text>
</comment>
<comment type="subunit">
    <text evidence="1">Interacts with UvrB in an incision complex.</text>
</comment>
<comment type="subcellular location">
    <subcellularLocation>
        <location evidence="1">Cytoplasm</location>
    </subcellularLocation>
</comment>
<comment type="similarity">
    <text evidence="1">Belongs to the UvrC family.</text>
</comment>
<name>UVRC_CLOTE</name>
<keyword id="KW-0963">Cytoplasm</keyword>
<keyword id="KW-0227">DNA damage</keyword>
<keyword id="KW-0228">DNA excision</keyword>
<keyword id="KW-0234">DNA repair</keyword>
<keyword id="KW-0267">Excision nuclease</keyword>
<keyword id="KW-1185">Reference proteome</keyword>
<keyword id="KW-0742">SOS response</keyword>
<protein>
    <recommendedName>
        <fullName evidence="1">UvrABC system protein C</fullName>
        <shortName evidence="1">Protein UvrC</shortName>
    </recommendedName>
    <alternativeName>
        <fullName evidence="1">Excinuclease ABC subunit C</fullName>
    </alternativeName>
</protein>